<feature type="chain" id="PRO_0000176563" description="Transcription antitermination protein NusB">
    <location>
        <begin position="1"/>
        <end position="138"/>
    </location>
</feature>
<sequence>MKPAARRRARECAVQAIYSWQLSGNSIADVELQFLSEQDVTGVDVTYFRELLSGVAVNAAKLDALMAPYLSRQLEELGQVEKAILRIAMFELSYRDDVPYKVAINEAIELAKVFGAEDSHKFVNGVLDKSGPAVRRKR</sequence>
<evidence type="ECO:0000255" key="1">
    <source>
        <dbReference type="HAMAP-Rule" id="MF_00073"/>
    </source>
</evidence>
<comment type="function">
    <text evidence="1">Involved in transcription antitermination. Required for transcription of ribosomal RNA (rRNA) genes. Binds specifically to the boxA antiterminator sequence of the ribosomal RNA (rrn) operons.</text>
</comment>
<comment type="similarity">
    <text evidence="1">Belongs to the NusB family.</text>
</comment>
<dbReference type="EMBL" id="BX571872">
    <property type="protein sequence ID" value="CAE16269.1"/>
    <property type="molecule type" value="Genomic_DNA"/>
</dbReference>
<dbReference type="RefSeq" id="WP_011148032.1">
    <property type="nucleotide sequence ID" value="NC_005126.1"/>
</dbReference>
<dbReference type="SMR" id="Q7N0J0"/>
<dbReference type="STRING" id="243265.plu3897"/>
<dbReference type="GeneID" id="48850126"/>
<dbReference type="KEGG" id="plu:plu3897"/>
<dbReference type="eggNOG" id="COG0781">
    <property type="taxonomic scope" value="Bacteria"/>
</dbReference>
<dbReference type="HOGENOM" id="CLU_087843_4_1_6"/>
<dbReference type="OrthoDB" id="9789556at2"/>
<dbReference type="Proteomes" id="UP000002514">
    <property type="component" value="Chromosome"/>
</dbReference>
<dbReference type="GO" id="GO:0005829">
    <property type="term" value="C:cytosol"/>
    <property type="evidence" value="ECO:0007669"/>
    <property type="project" value="TreeGrafter"/>
</dbReference>
<dbReference type="GO" id="GO:0003723">
    <property type="term" value="F:RNA binding"/>
    <property type="evidence" value="ECO:0007669"/>
    <property type="project" value="UniProtKB-UniRule"/>
</dbReference>
<dbReference type="GO" id="GO:0006353">
    <property type="term" value="P:DNA-templated transcription termination"/>
    <property type="evidence" value="ECO:0007669"/>
    <property type="project" value="UniProtKB-UniRule"/>
</dbReference>
<dbReference type="GO" id="GO:0031564">
    <property type="term" value="P:transcription antitermination"/>
    <property type="evidence" value="ECO:0007669"/>
    <property type="project" value="UniProtKB-KW"/>
</dbReference>
<dbReference type="CDD" id="cd00619">
    <property type="entry name" value="Terminator_NusB"/>
    <property type="match status" value="1"/>
</dbReference>
<dbReference type="FunFam" id="1.10.940.10:FF:000001">
    <property type="entry name" value="Transcription antitermination factor NusB"/>
    <property type="match status" value="1"/>
</dbReference>
<dbReference type="Gene3D" id="1.10.940.10">
    <property type="entry name" value="NusB-like"/>
    <property type="match status" value="1"/>
</dbReference>
<dbReference type="HAMAP" id="MF_00073">
    <property type="entry name" value="NusB"/>
    <property type="match status" value="1"/>
</dbReference>
<dbReference type="InterPro" id="IPR035926">
    <property type="entry name" value="NusB-like_sf"/>
</dbReference>
<dbReference type="InterPro" id="IPR011605">
    <property type="entry name" value="NusB_fam"/>
</dbReference>
<dbReference type="InterPro" id="IPR006027">
    <property type="entry name" value="NusB_RsmB_TIM44"/>
</dbReference>
<dbReference type="NCBIfam" id="TIGR01951">
    <property type="entry name" value="nusB"/>
    <property type="match status" value="1"/>
</dbReference>
<dbReference type="PANTHER" id="PTHR11078:SF3">
    <property type="entry name" value="ANTITERMINATION NUSB DOMAIN-CONTAINING PROTEIN"/>
    <property type="match status" value="1"/>
</dbReference>
<dbReference type="PANTHER" id="PTHR11078">
    <property type="entry name" value="N UTILIZATION SUBSTANCE PROTEIN B-RELATED"/>
    <property type="match status" value="1"/>
</dbReference>
<dbReference type="Pfam" id="PF01029">
    <property type="entry name" value="NusB"/>
    <property type="match status" value="1"/>
</dbReference>
<dbReference type="SUPFAM" id="SSF48013">
    <property type="entry name" value="NusB-like"/>
    <property type="match status" value="1"/>
</dbReference>
<reference key="1">
    <citation type="journal article" date="2003" name="Nat. Biotechnol.">
        <title>The genome sequence of the entomopathogenic bacterium Photorhabdus luminescens.</title>
        <authorList>
            <person name="Duchaud E."/>
            <person name="Rusniok C."/>
            <person name="Frangeul L."/>
            <person name="Buchrieser C."/>
            <person name="Givaudan A."/>
            <person name="Taourit S."/>
            <person name="Bocs S."/>
            <person name="Boursaux-Eude C."/>
            <person name="Chandler M."/>
            <person name="Charles J.-F."/>
            <person name="Dassa E."/>
            <person name="Derose R."/>
            <person name="Derzelle S."/>
            <person name="Freyssinet G."/>
            <person name="Gaudriault S."/>
            <person name="Medigue C."/>
            <person name="Lanois A."/>
            <person name="Powell K."/>
            <person name="Siguier P."/>
            <person name="Vincent R."/>
            <person name="Wingate V."/>
            <person name="Zouine M."/>
            <person name="Glaser P."/>
            <person name="Boemare N."/>
            <person name="Danchin A."/>
            <person name="Kunst F."/>
        </authorList>
    </citation>
    <scope>NUCLEOTIDE SEQUENCE [LARGE SCALE GENOMIC DNA]</scope>
    <source>
        <strain>DSM 15139 / CIP 105565 / TT01</strain>
    </source>
</reference>
<protein>
    <recommendedName>
        <fullName evidence="1">Transcription antitermination protein NusB</fullName>
    </recommendedName>
    <alternativeName>
        <fullName evidence="1">Antitermination factor NusB</fullName>
    </alternativeName>
</protein>
<accession>Q7N0J0</accession>
<keyword id="KW-1185">Reference proteome</keyword>
<keyword id="KW-0694">RNA-binding</keyword>
<keyword id="KW-0804">Transcription</keyword>
<keyword id="KW-0889">Transcription antitermination</keyword>
<keyword id="KW-0805">Transcription regulation</keyword>
<gene>
    <name evidence="1" type="primary">nusB</name>
    <name type="ordered locus">plu3897</name>
</gene>
<name>NUSB_PHOLL</name>
<proteinExistence type="inferred from homology"/>
<organism>
    <name type="scientific">Photorhabdus laumondii subsp. laumondii (strain DSM 15139 / CIP 105565 / TT01)</name>
    <name type="common">Photorhabdus luminescens subsp. laumondii</name>
    <dbReference type="NCBI Taxonomy" id="243265"/>
    <lineage>
        <taxon>Bacteria</taxon>
        <taxon>Pseudomonadati</taxon>
        <taxon>Pseudomonadota</taxon>
        <taxon>Gammaproteobacteria</taxon>
        <taxon>Enterobacterales</taxon>
        <taxon>Morganellaceae</taxon>
        <taxon>Photorhabdus</taxon>
    </lineage>
</organism>